<proteinExistence type="inferred from homology"/>
<reference key="1">
    <citation type="journal article" date="2006" name="DNA Res.">
        <title>Genome sequence of the cat pathogen, Chlamydophila felis.</title>
        <authorList>
            <person name="Azuma Y."/>
            <person name="Hirakawa H."/>
            <person name="Yamashita A."/>
            <person name="Cai Y."/>
            <person name="Rahman M.A."/>
            <person name="Suzuki H."/>
            <person name="Mitaku S."/>
            <person name="Toh H."/>
            <person name="Goto S."/>
            <person name="Murakami T."/>
            <person name="Sugi K."/>
            <person name="Hayashi H."/>
            <person name="Fukushi H."/>
            <person name="Hattori M."/>
            <person name="Kuhara S."/>
            <person name="Shirai M."/>
        </authorList>
    </citation>
    <scope>NUCLEOTIDE SEQUENCE [LARGE SCALE GENOMIC DNA]</scope>
    <source>
        <strain>Fe/C-56</strain>
    </source>
</reference>
<evidence type="ECO:0000255" key="1">
    <source>
        <dbReference type="HAMAP-Rule" id="MF_01208"/>
    </source>
</evidence>
<accession>Q252Z2</accession>
<protein>
    <recommendedName>
        <fullName evidence="1">Orotate phosphoribosyltransferase</fullName>
        <shortName evidence="1">OPRT</shortName>
        <shortName evidence="1">OPRTase</shortName>
        <ecNumber evidence="1">2.4.2.10</ecNumber>
    </recommendedName>
</protein>
<comment type="function">
    <text evidence="1">Catalyzes the transfer of a ribosyl phosphate group from 5-phosphoribose 1-diphosphate to orotate, leading to the formation of orotidine monophosphate (OMP).</text>
</comment>
<comment type="catalytic activity">
    <reaction evidence="1">
        <text>orotidine 5'-phosphate + diphosphate = orotate + 5-phospho-alpha-D-ribose 1-diphosphate</text>
        <dbReference type="Rhea" id="RHEA:10380"/>
        <dbReference type="ChEBI" id="CHEBI:30839"/>
        <dbReference type="ChEBI" id="CHEBI:33019"/>
        <dbReference type="ChEBI" id="CHEBI:57538"/>
        <dbReference type="ChEBI" id="CHEBI:58017"/>
        <dbReference type="EC" id="2.4.2.10"/>
    </reaction>
</comment>
<comment type="cofactor">
    <cofactor evidence="1">
        <name>Mg(2+)</name>
        <dbReference type="ChEBI" id="CHEBI:18420"/>
    </cofactor>
</comment>
<comment type="pathway">
    <text evidence="1">Pyrimidine metabolism; UMP biosynthesis via de novo pathway; UMP from orotate: step 1/2.</text>
</comment>
<comment type="subunit">
    <text evidence="1">Homodimer.</text>
</comment>
<comment type="similarity">
    <text evidence="1">Belongs to the purine/pyrimidine phosphoribosyltransferase family. PyrE subfamily.</text>
</comment>
<sequence>MTSFEEEQLRDHAVANLYRIGAIRFGDFNLSDGQKTHIYVDMRPVISCPDVLQTIASLIWRLRPSFNSSLLCGVPYTALALATCISLKYNISMVLRRKELKHSSQEDRIKVEGLFSSGQTCLVINDVIASGRSILETAKALEDEGLNIRESLVFLDRQVGGEAVLKEAGIKLRSVFTLEDLVKSLLSKCELKDTDAAMASALIKNL</sequence>
<keyword id="KW-0328">Glycosyltransferase</keyword>
<keyword id="KW-0460">Magnesium</keyword>
<keyword id="KW-0665">Pyrimidine biosynthesis</keyword>
<keyword id="KW-0808">Transferase</keyword>
<name>PYRE_CHLFF</name>
<feature type="chain" id="PRO_1000066220" description="Orotate phosphoribosyltransferase">
    <location>
        <begin position="1"/>
        <end position="206"/>
    </location>
</feature>
<feature type="binding site" evidence="1">
    <location>
        <position position="97"/>
    </location>
    <ligand>
        <name>5-phospho-alpha-D-ribose 1-diphosphate</name>
        <dbReference type="ChEBI" id="CHEBI:58017"/>
        <note>ligand shared between dimeric partners</note>
    </ligand>
</feature>
<feature type="binding site" description="in other chain" evidence="1">
    <location>
        <position position="98"/>
    </location>
    <ligand>
        <name>5-phospho-alpha-D-ribose 1-diphosphate</name>
        <dbReference type="ChEBI" id="CHEBI:58017"/>
        <note>ligand shared between dimeric partners</note>
    </ligand>
</feature>
<feature type="binding site" evidence="1">
    <location>
        <position position="101"/>
    </location>
    <ligand>
        <name>5-phospho-alpha-D-ribose 1-diphosphate</name>
        <dbReference type="ChEBI" id="CHEBI:58017"/>
        <note>ligand shared between dimeric partners</note>
    </ligand>
</feature>
<feature type="binding site" description="in other chain" evidence="1">
    <location>
        <begin position="125"/>
        <end position="133"/>
    </location>
    <ligand>
        <name>5-phospho-alpha-D-ribose 1-diphosphate</name>
        <dbReference type="ChEBI" id="CHEBI:58017"/>
        <note>ligand shared between dimeric partners</note>
    </ligand>
</feature>
<feature type="binding site" evidence="1">
    <location>
        <position position="157"/>
    </location>
    <ligand>
        <name>orotate</name>
        <dbReference type="ChEBI" id="CHEBI:30839"/>
    </ligand>
</feature>
<organism>
    <name type="scientific">Chlamydia felis (strain Fe/C-56)</name>
    <name type="common">Chlamydophila felis</name>
    <dbReference type="NCBI Taxonomy" id="264202"/>
    <lineage>
        <taxon>Bacteria</taxon>
        <taxon>Pseudomonadati</taxon>
        <taxon>Chlamydiota</taxon>
        <taxon>Chlamydiia</taxon>
        <taxon>Chlamydiales</taxon>
        <taxon>Chlamydiaceae</taxon>
        <taxon>Chlamydia/Chlamydophila group</taxon>
        <taxon>Chlamydia</taxon>
    </lineage>
</organism>
<dbReference type="EC" id="2.4.2.10" evidence="1"/>
<dbReference type="EMBL" id="AP006861">
    <property type="protein sequence ID" value="BAE81646.1"/>
    <property type="molecule type" value="Genomic_DNA"/>
</dbReference>
<dbReference type="RefSeq" id="WP_011458421.1">
    <property type="nucleotide sequence ID" value="NC_007899.1"/>
</dbReference>
<dbReference type="SMR" id="Q252Z2"/>
<dbReference type="STRING" id="264202.CF0874"/>
<dbReference type="KEGG" id="cfe:CF0874"/>
<dbReference type="eggNOG" id="COG0461">
    <property type="taxonomic scope" value="Bacteria"/>
</dbReference>
<dbReference type="HOGENOM" id="CLU_074878_2_0_0"/>
<dbReference type="OrthoDB" id="9802134at2"/>
<dbReference type="UniPathway" id="UPA00070">
    <property type="reaction ID" value="UER00119"/>
</dbReference>
<dbReference type="Proteomes" id="UP000001260">
    <property type="component" value="Chromosome"/>
</dbReference>
<dbReference type="GO" id="GO:0000287">
    <property type="term" value="F:magnesium ion binding"/>
    <property type="evidence" value="ECO:0007669"/>
    <property type="project" value="UniProtKB-UniRule"/>
</dbReference>
<dbReference type="GO" id="GO:0004588">
    <property type="term" value="F:orotate phosphoribosyltransferase activity"/>
    <property type="evidence" value="ECO:0007669"/>
    <property type="project" value="UniProtKB-UniRule"/>
</dbReference>
<dbReference type="GO" id="GO:0004590">
    <property type="term" value="F:orotidine-5'-phosphate decarboxylase activity"/>
    <property type="evidence" value="ECO:0007669"/>
    <property type="project" value="TreeGrafter"/>
</dbReference>
<dbReference type="GO" id="GO:0044205">
    <property type="term" value="P:'de novo' UMP biosynthetic process"/>
    <property type="evidence" value="ECO:0007669"/>
    <property type="project" value="UniProtKB-UniRule"/>
</dbReference>
<dbReference type="GO" id="GO:0019856">
    <property type="term" value="P:pyrimidine nucleobase biosynthetic process"/>
    <property type="evidence" value="ECO:0007669"/>
    <property type="project" value="TreeGrafter"/>
</dbReference>
<dbReference type="CDD" id="cd06223">
    <property type="entry name" value="PRTases_typeI"/>
    <property type="match status" value="1"/>
</dbReference>
<dbReference type="Gene3D" id="3.40.50.2020">
    <property type="match status" value="1"/>
</dbReference>
<dbReference type="HAMAP" id="MF_01208">
    <property type="entry name" value="PyrE"/>
    <property type="match status" value="1"/>
</dbReference>
<dbReference type="InterPro" id="IPR023031">
    <property type="entry name" value="OPRT"/>
</dbReference>
<dbReference type="InterPro" id="IPR000836">
    <property type="entry name" value="PRibTrfase_dom"/>
</dbReference>
<dbReference type="InterPro" id="IPR029057">
    <property type="entry name" value="PRTase-like"/>
</dbReference>
<dbReference type="NCBIfam" id="NF010382">
    <property type="entry name" value="PRK13809.1"/>
    <property type="match status" value="1"/>
</dbReference>
<dbReference type="PANTHER" id="PTHR19278">
    <property type="entry name" value="OROTATE PHOSPHORIBOSYLTRANSFERASE"/>
    <property type="match status" value="1"/>
</dbReference>
<dbReference type="PANTHER" id="PTHR19278:SF9">
    <property type="entry name" value="URIDINE 5'-MONOPHOSPHATE SYNTHASE"/>
    <property type="match status" value="1"/>
</dbReference>
<dbReference type="Pfam" id="PF00156">
    <property type="entry name" value="Pribosyltran"/>
    <property type="match status" value="1"/>
</dbReference>
<dbReference type="SUPFAM" id="SSF53271">
    <property type="entry name" value="PRTase-like"/>
    <property type="match status" value="1"/>
</dbReference>
<gene>
    <name evidence="1" type="primary">pyrE</name>
    <name type="ordered locus">CF0874</name>
</gene>